<feature type="chain" id="PRO_0000247145" description="BTB/POZ domain-containing protein KCTD1">
    <location>
        <begin position="1"/>
        <end position="257"/>
    </location>
</feature>
<feature type="domain" description="BTB">
    <location>
        <begin position="30"/>
        <end position="100"/>
    </location>
</feature>
<feature type="region of interest" description="Disordered" evidence="3">
    <location>
        <begin position="1"/>
        <end position="25"/>
    </location>
</feature>
<feature type="compositionally biased region" description="Polar residues" evidence="3">
    <location>
        <begin position="9"/>
        <end position="25"/>
    </location>
</feature>
<feature type="modified residue" description="Phosphoserine" evidence="5">
    <location>
        <position position="9"/>
    </location>
</feature>
<feature type="modified residue" description="Phosphoserine" evidence="5">
    <location>
        <position position="12"/>
    </location>
</feature>
<feature type="splice variant" id="VSP_019931" description="In isoform 2." evidence="4">
    <original>M</original>
    <variation>MFQDSRPNM</variation>
    <location>
        <position position="1"/>
    </location>
</feature>
<comment type="function">
    <text evidence="2">May repress the transcriptional activity of AP-2 family members, including TFAP2A, TFAP2B and TFAP2C to various extent.</text>
</comment>
<comment type="subunit">
    <text evidence="2">Forms homopentamers. Interacts with KCTD15, probably forming heteropentamers depending on its abundance in a cell-type dependent manner. Interacts with TFAP2A, TFAP2B and TFAP2C via the BTB domain.</text>
</comment>
<comment type="subcellular location">
    <subcellularLocation>
        <location evidence="2">Nucleus</location>
    </subcellularLocation>
</comment>
<comment type="alternative products">
    <event type="alternative splicing"/>
    <isoform>
        <id>Q5M956-1</id>
        <name>1</name>
        <sequence type="displayed"/>
    </isoform>
    <isoform>
        <id>Q5M956-2</id>
        <name>2</name>
        <sequence type="described" ref="VSP_019931"/>
    </isoform>
</comment>
<comment type="PTM">
    <text evidence="1">Sumoylated.</text>
</comment>
<sequence>MSRPLITRSPASPLNNQGIPTPAQLTKSNAPVHIDVGGHMYTSSLATLTKYPESRIGRLFDGTEPIVLDSLKQHYFIDRDGQMFRYILNFLRTSKLLIPDDFKDYTLLYEEAKYFQLQPMLLEMERWKQDRETGRFSRPCECLVVRVAPDLGERITLSGDKSLIEEVFPEIGDVMCNSVNAGWNHDSTHVIRFPLNGYCHLNSVQVLERLQQRGFEIVGSCGGGVDSSQFSEYVLRRELRRTPRVPSVIRIKQEPLD</sequence>
<dbReference type="EMBL" id="AY899808">
    <property type="protein sequence ID" value="AAW88504.1"/>
    <property type="molecule type" value="mRNA"/>
</dbReference>
<dbReference type="EMBL" id="BC087623">
    <property type="protein sequence ID" value="AAH87623.1"/>
    <property type="molecule type" value="mRNA"/>
</dbReference>
<dbReference type="CCDS" id="CCDS50229.1">
    <molecule id="Q5M956-2"/>
</dbReference>
<dbReference type="RefSeq" id="NP_598873.2">
    <molecule id="Q5M956-2"/>
    <property type="nucleotide sequence ID" value="NM_134112.5"/>
</dbReference>
<dbReference type="RefSeq" id="XP_006525548.1">
    <molecule id="Q5M956-1"/>
    <property type="nucleotide sequence ID" value="XM_006525485.5"/>
</dbReference>
<dbReference type="RefSeq" id="XP_036016811.1">
    <molecule id="Q5M956-1"/>
    <property type="nucleotide sequence ID" value="XM_036160918.1"/>
</dbReference>
<dbReference type="SMR" id="Q5M956"/>
<dbReference type="FunCoup" id="Q5M956">
    <property type="interactions" value="1249"/>
</dbReference>
<dbReference type="IntAct" id="Q5M956">
    <property type="interactions" value="1"/>
</dbReference>
<dbReference type="STRING" id="10090.ENSMUSP00000128070"/>
<dbReference type="iPTMnet" id="Q5M956"/>
<dbReference type="jPOST" id="Q5M956"/>
<dbReference type="PaxDb" id="10090-ENSMUSP00000128070"/>
<dbReference type="PeptideAtlas" id="Q5M956"/>
<dbReference type="ProteomicsDB" id="269210">
    <molecule id="Q5M956-1"/>
</dbReference>
<dbReference type="ProteomicsDB" id="269211">
    <molecule id="Q5M956-2"/>
</dbReference>
<dbReference type="Antibodypedia" id="54340">
    <property type="antibodies" value="100 antibodies from 13 providers"/>
</dbReference>
<dbReference type="DNASU" id="106931"/>
<dbReference type="Ensembl" id="ENSMUST00000025992.7">
    <molecule id="Q5M956-2"/>
    <property type="protein sequence ID" value="ENSMUSP00000025992.7"/>
    <property type="gene ID" value="ENSMUSG00000036225.16"/>
</dbReference>
<dbReference type="GeneID" id="106931"/>
<dbReference type="KEGG" id="mmu:106931"/>
<dbReference type="UCSC" id="uc008edo.1">
    <molecule id="Q5M956-2"/>
    <property type="organism name" value="mouse"/>
</dbReference>
<dbReference type="AGR" id="MGI:1918269"/>
<dbReference type="CTD" id="284252"/>
<dbReference type="MGI" id="MGI:1918269">
    <property type="gene designation" value="Kctd1"/>
</dbReference>
<dbReference type="VEuPathDB" id="HostDB:ENSMUSG00000036225"/>
<dbReference type="eggNOG" id="KOG2723">
    <property type="taxonomic scope" value="Eukaryota"/>
</dbReference>
<dbReference type="GeneTree" id="ENSGT00940000156453"/>
<dbReference type="HOGENOM" id="CLU_061268_1_0_1"/>
<dbReference type="InParanoid" id="Q5M956"/>
<dbReference type="OrthoDB" id="2414723at2759"/>
<dbReference type="PhylomeDB" id="Q5M956"/>
<dbReference type="Reactome" id="R-MMU-8866904">
    <property type="pathway name" value="Negative regulation of activity of TFAP2 (AP-2) family transcription factors"/>
</dbReference>
<dbReference type="BioGRID-ORCS" id="106931">
    <property type="hits" value="1 hit in 73 CRISPR screens"/>
</dbReference>
<dbReference type="ChiTaRS" id="Kctd1">
    <property type="organism name" value="mouse"/>
</dbReference>
<dbReference type="PRO" id="PR:Q5M956"/>
<dbReference type="Proteomes" id="UP000000589">
    <property type="component" value="Chromosome 18"/>
</dbReference>
<dbReference type="RNAct" id="Q5M956">
    <property type="molecule type" value="protein"/>
</dbReference>
<dbReference type="Bgee" id="ENSMUSG00000036225">
    <property type="expression patterns" value="Expressed in olfactory tubercle and 255 other cell types or tissues"/>
</dbReference>
<dbReference type="ExpressionAtlas" id="Q5M956">
    <property type="expression patterns" value="baseline and differential"/>
</dbReference>
<dbReference type="GO" id="GO:0005634">
    <property type="term" value="C:nucleus"/>
    <property type="evidence" value="ECO:0000250"/>
    <property type="project" value="UniProtKB"/>
</dbReference>
<dbReference type="GO" id="GO:0045892">
    <property type="term" value="P:negative regulation of DNA-templated transcription"/>
    <property type="evidence" value="ECO:0000250"/>
    <property type="project" value="UniProtKB"/>
</dbReference>
<dbReference type="GO" id="GO:0051260">
    <property type="term" value="P:protein homooligomerization"/>
    <property type="evidence" value="ECO:0007669"/>
    <property type="project" value="InterPro"/>
</dbReference>
<dbReference type="CDD" id="cd18387">
    <property type="entry name" value="BTB_POZ_KCTD1"/>
    <property type="match status" value="1"/>
</dbReference>
<dbReference type="FunFam" id="3.30.710.10:FF:000003">
    <property type="entry name" value="BTB/POZ domain-containing protein KCTD6 isoform X2"/>
    <property type="match status" value="1"/>
</dbReference>
<dbReference type="Gene3D" id="3.30.710.10">
    <property type="entry name" value="Potassium Channel Kv1.1, Chain A"/>
    <property type="match status" value="1"/>
</dbReference>
<dbReference type="InterPro" id="IPR000210">
    <property type="entry name" value="BTB/POZ_dom"/>
</dbReference>
<dbReference type="InterPro" id="IPR048599">
    <property type="entry name" value="BTB_POZ_KCTD1"/>
</dbReference>
<dbReference type="InterPro" id="IPR048595">
    <property type="entry name" value="KCTD1-15-like_C"/>
</dbReference>
<dbReference type="InterPro" id="IPR011333">
    <property type="entry name" value="SKP1/BTB/POZ_sf"/>
</dbReference>
<dbReference type="InterPro" id="IPR003131">
    <property type="entry name" value="T1-type_BTB"/>
</dbReference>
<dbReference type="PANTHER" id="PTHR14499:SF65">
    <property type="entry name" value="BTB_POZ DOMAIN-CONTAINING PROTEIN KCTD1"/>
    <property type="match status" value="1"/>
</dbReference>
<dbReference type="PANTHER" id="PTHR14499">
    <property type="entry name" value="POTASSIUM CHANNEL TETRAMERIZATION DOMAIN-CONTAINING"/>
    <property type="match status" value="1"/>
</dbReference>
<dbReference type="Pfam" id="PF02214">
    <property type="entry name" value="BTB_2"/>
    <property type="match status" value="1"/>
</dbReference>
<dbReference type="Pfam" id="PF20871">
    <property type="entry name" value="KCTD1-15_CTD"/>
    <property type="match status" value="1"/>
</dbReference>
<dbReference type="SMART" id="SM00225">
    <property type="entry name" value="BTB"/>
    <property type="match status" value="1"/>
</dbReference>
<dbReference type="SUPFAM" id="SSF54695">
    <property type="entry name" value="POZ domain"/>
    <property type="match status" value="1"/>
</dbReference>
<accession>Q5M956</accession>
<accession>Q5EER9</accession>
<name>KCTD1_MOUSE</name>
<reference key="1">
    <citation type="submission" date="2005-01" db="EMBL/GenBank/DDBJ databases">
        <authorList>
            <person name="Zhou J."/>
            <person name="Zhang J."/>
        </authorList>
    </citation>
    <scope>NUCLEOTIDE SEQUENCE [MRNA] (ISOFORM 2)</scope>
    <source>
        <strain>KM</strain>
    </source>
</reference>
<reference key="2">
    <citation type="journal article" date="2004" name="Genome Res.">
        <title>The status, quality, and expansion of the NIH full-length cDNA project: the Mammalian Gene Collection (MGC).</title>
        <authorList>
            <consortium name="The MGC Project Team"/>
        </authorList>
    </citation>
    <scope>NUCLEOTIDE SEQUENCE [LARGE SCALE MRNA] (ISOFORM 1)</scope>
    <source>
        <strain>FVB/N-3</strain>
        <tissue>Mammary tumor</tissue>
    </source>
</reference>
<reference key="3">
    <citation type="journal article" date="2010" name="Cell">
        <title>A tissue-specific atlas of mouse protein phosphorylation and expression.</title>
        <authorList>
            <person name="Huttlin E.L."/>
            <person name="Jedrychowski M.P."/>
            <person name="Elias J.E."/>
            <person name="Goswami T."/>
            <person name="Rad R."/>
            <person name="Beausoleil S.A."/>
            <person name="Villen J."/>
            <person name="Haas W."/>
            <person name="Sowa M.E."/>
            <person name="Gygi S.P."/>
        </authorList>
    </citation>
    <scope>PHOSPHORYLATION [LARGE SCALE ANALYSIS] AT SER-9 AND SER-12</scope>
    <scope>IDENTIFICATION BY MASS SPECTROMETRY [LARGE SCALE ANALYSIS]</scope>
    <source>
        <tissue>Brain</tissue>
        <tissue>Kidney</tissue>
        <tissue>Spleen</tissue>
    </source>
</reference>
<keyword id="KW-0025">Alternative splicing</keyword>
<keyword id="KW-0539">Nucleus</keyword>
<keyword id="KW-0597">Phosphoprotein</keyword>
<keyword id="KW-1185">Reference proteome</keyword>
<keyword id="KW-0678">Repressor</keyword>
<keyword id="KW-0804">Transcription</keyword>
<keyword id="KW-0805">Transcription regulation</keyword>
<keyword id="KW-0832">Ubl conjugation</keyword>
<organism>
    <name type="scientific">Mus musculus</name>
    <name type="common">Mouse</name>
    <dbReference type="NCBI Taxonomy" id="10090"/>
    <lineage>
        <taxon>Eukaryota</taxon>
        <taxon>Metazoa</taxon>
        <taxon>Chordata</taxon>
        <taxon>Craniata</taxon>
        <taxon>Vertebrata</taxon>
        <taxon>Euteleostomi</taxon>
        <taxon>Mammalia</taxon>
        <taxon>Eutheria</taxon>
        <taxon>Euarchontoglires</taxon>
        <taxon>Glires</taxon>
        <taxon>Rodentia</taxon>
        <taxon>Myomorpha</taxon>
        <taxon>Muroidea</taxon>
        <taxon>Muridae</taxon>
        <taxon>Murinae</taxon>
        <taxon>Mus</taxon>
        <taxon>Mus</taxon>
    </lineage>
</organism>
<evidence type="ECO:0000250" key="1"/>
<evidence type="ECO:0000250" key="2">
    <source>
        <dbReference type="UniProtKB" id="Q719H9"/>
    </source>
</evidence>
<evidence type="ECO:0000256" key="3">
    <source>
        <dbReference type="SAM" id="MobiDB-lite"/>
    </source>
</evidence>
<evidence type="ECO:0000303" key="4">
    <source ref="1"/>
</evidence>
<evidence type="ECO:0007744" key="5">
    <source>
    </source>
</evidence>
<protein>
    <recommendedName>
        <fullName>BTB/POZ domain-containing protein KCTD1</fullName>
    </recommendedName>
</protein>
<proteinExistence type="evidence at protein level"/>
<gene>
    <name type="primary">Kctd1</name>
</gene>